<name>MCC22_ARATH</name>
<accession>Q58FV5</accession>
<accession>Q9M2I8</accession>
<keyword id="KW-0175">Coiled coil</keyword>
<keyword id="KW-1185">Reference proteome</keyword>
<proteinExistence type="evidence at transcript level"/>
<sequence>MANQGGFKKKTFGWVIKDLQTHRRCSVPILIGDSYWRLVALPNENGYFSLFLEVNMELIPCGWRRYVEFRMTIVNHISPIHSVDKKGWRWFDENTKNWGFKDMIPAVILNNVNVGFLLNGEITIIAEVEVHEFIDTLNASQVEELSDDSSEDLQNKDNVTIEVNGFQVLDSQVDQVNAIFEKHPDLISNFSLKNQHIRNAYMHALLDLTKTLSKSTKELTVEDMNEADNTITDLIKAGLNLDWLRQKFDQALEKQIAYDTRIGELEKQVKKRKLAVTELEADLEKEKAAASASLMLFD</sequence>
<dbReference type="EMBL" id="AL137081">
    <property type="protein sequence ID" value="CAB68166.1"/>
    <property type="status" value="ALT_SEQ"/>
    <property type="molecule type" value="Genomic_DNA"/>
</dbReference>
<dbReference type="EMBL" id="CP002686">
    <property type="protein sequence ID" value="AEE79763.2"/>
    <property type="molecule type" value="Genomic_DNA"/>
</dbReference>
<dbReference type="EMBL" id="DQ132701">
    <property type="protein sequence ID" value="AAZ52731.1"/>
    <property type="status" value="ALT_INIT"/>
    <property type="molecule type" value="mRNA"/>
</dbReference>
<dbReference type="EMBL" id="AY954854">
    <property type="protein sequence ID" value="AAX55180.1"/>
    <property type="molecule type" value="mRNA"/>
</dbReference>
<dbReference type="PIR" id="T45988">
    <property type="entry name" value="T45988"/>
</dbReference>
<dbReference type="RefSeq" id="NP_001319791.1">
    <property type="nucleotide sequence ID" value="NM_001339917.1"/>
</dbReference>
<dbReference type="SMR" id="Q58FV5"/>
<dbReference type="STRING" id="3702.Q58FV5"/>
<dbReference type="PaxDb" id="3702-AT3G58280.1"/>
<dbReference type="EnsemblPlants" id="AT3G58280.1">
    <property type="protein sequence ID" value="AT3G58280.1"/>
    <property type="gene ID" value="AT3G58280"/>
</dbReference>
<dbReference type="GeneID" id="824997"/>
<dbReference type="Gramene" id="AT3G58280.1">
    <property type="protein sequence ID" value="AT3G58280.1"/>
    <property type="gene ID" value="AT3G58280"/>
</dbReference>
<dbReference type="KEGG" id="ath:AT3G58280"/>
<dbReference type="Araport" id="AT3G58280"/>
<dbReference type="TAIR" id="AT3G58280"/>
<dbReference type="eggNOG" id="KOG1987">
    <property type="taxonomic scope" value="Eukaryota"/>
</dbReference>
<dbReference type="HOGENOM" id="CLU_026537_1_0_1"/>
<dbReference type="InParanoid" id="Q58FV5"/>
<dbReference type="OMA" id="RERRIWF"/>
<dbReference type="OrthoDB" id="1103725at2759"/>
<dbReference type="PRO" id="PR:Q58FV5"/>
<dbReference type="Proteomes" id="UP000006548">
    <property type="component" value="Chromosome 3"/>
</dbReference>
<dbReference type="ExpressionAtlas" id="Q58FV5">
    <property type="expression patterns" value="baseline and differential"/>
</dbReference>
<dbReference type="CDD" id="cd00121">
    <property type="entry name" value="MATH"/>
    <property type="match status" value="1"/>
</dbReference>
<dbReference type="Gene3D" id="2.60.210.10">
    <property type="entry name" value="Apoptosis, Tumor Necrosis Factor Receptor Associated Protein 2, Chain A"/>
    <property type="match status" value="1"/>
</dbReference>
<dbReference type="InterPro" id="IPR050804">
    <property type="entry name" value="MATH-CC_domain_protein"/>
</dbReference>
<dbReference type="InterPro" id="IPR002083">
    <property type="entry name" value="MATH/TRAF_dom"/>
</dbReference>
<dbReference type="InterPro" id="IPR008974">
    <property type="entry name" value="TRAF-like"/>
</dbReference>
<dbReference type="PANTHER" id="PTHR46236:SF2">
    <property type="entry name" value="PHOSPHOLIPASE-LIKE PROTEIN (PEARLI 4) FAMILY PROTEIN"/>
    <property type="match status" value="1"/>
</dbReference>
<dbReference type="PANTHER" id="PTHR46236">
    <property type="entry name" value="TRAF-LIKE SUPERFAMILY PROTEIN"/>
    <property type="match status" value="1"/>
</dbReference>
<dbReference type="Pfam" id="PF22486">
    <property type="entry name" value="MATH_2"/>
    <property type="match status" value="1"/>
</dbReference>
<dbReference type="SMART" id="SM00061">
    <property type="entry name" value="MATH"/>
    <property type="match status" value="1"/>
</dbReference>
<dbReference type="SUPFAM" id="SSF49599">
    <property type="entry name" value="TRAF domain-like"/>
    <property type="match status" value="1"/>
</dbReference>
<dbReference type="PROSITE" id="PS50144">
    <property type="entry name" value="MATH"/>
    <property type="match status" value="1"/>
</dbReference>
<comment type="sequence caution" evidence="3">
    <conflict type="erroneous initiation">
        <sequence resource="EMBL-CDS" id="AAZ52731"/>
    </conflict>
    <text>Truncated N-terminus.</text>
</comment>
<comment type="sequence caution" evidence="3">
    <conflict type="erroneous gene model prediction">
        <sequence resource="EMBL-CDS" id="CAB68166"/>
    </conflict>
</comment>
<feature type="chain" id="PRO_0000429299" description="MATH domain and coiled-coil domain-containing protein At3g58280">
    <location>
        <begin position="1"/>
        <end position="298"/>
    </location>
</feature>
<feature type="domain" description="MATH" evidence="2">
    <location>
        <begin position="9"/>
        <end position="128"/>
    </location>
</feature>
<feature type="coiled-coil region" evidence="1">
    <location>
        <begin position="240"/>
        <end position="288"/>
    </location>
</feature>
<reference key="1">
    <citation type="journal article" date="2000" name="Nature">
        <title>Sequence and analysis of chromosome 3 of the plant Arabidopsis thaliana.</title>
        <authorList>
            <person name="Salanoubat M."/>
            <person name="Lemcke K."/>
            <person name="Rieger M."/>
            <person name="Ansorge W."/>
            <person name="Unseld M."/>
            <person name="Fartmann B."/>
            <person name="Valle G."/>
            <person name="Bloecker H."/>
            <person name="Perez-Alonso M."/>
            <person name="Obermaier B."/>
            <person name="Delseny M."/>
            <person name="Boutry M."/>
            <person name="Grivell L.A."/>
            <person name="Mache R."/>
            <person name="Puigdomenech P."/>
            <person name="De Simone V."/>
            <person name="Choisne N."/>
            <person name="Artiguenave F."/>
            <person name="Robert C."/>
            <person name="Brottier P."/>
            <person name="Wincker P."/>
            <person name="Cattolico L."/>
            <person name="Weissenbach J."/>
            <person name="Saurin W."/>
            <person name="Quetier F."/>
            <person name="Schaefer M."/>
            <person name="Mueller-Auer S."/>
            <person name="Gabel C."/>
            <person name="Fuchs M."/>
            <person name="Benes V."/>
            <person name="Wurmbach E."/>
            <person name="Drzonek H."/>
            <person name="Erfle H."/>
            <person name="Jordan N."/>
            <person name="Bangert S."/>
            <person name="Wiedelmann R."/>
            <person name="Kranz H."/>
            <person name="Voss H."/>
            <person name="Holland R."/>
            <person name="Brandt P."/>
            <person name="Nyakatura G."/>
            <person name="Vezzi A."/>
            <person name="D'Angelo M."/>
            <person name="Pallavicini A."/>
            <person name="Toppo S."/>
            <person name="Simionati B."/>
            <person name="Conrad A."/>
            <person name="Hornischer K."/>
            <person name="Kauer G."/>
            <person name="Loehnert T.-H."/>
            <person name="Nordsiek G."/>
            <person name="Reichelt J."/>
            <person name="Scharfe M."/>
            <person name="Schoen O."/>
            <person name="Bargues M."/>
            <person name="Terol J."/>
            <person name="Climent J."/>
            <person name="Navarro P."/>
            <person name="Collado C."/>
            <person name="Perez-Perez A."/>
            <person name="Ottenwaelder B."/>
            <person name="Duchemin D."/>
            <person name="Cooke R."/>
            <person name="Laudie M."/>
            <person name="Berger-Llauro C."/>
            <person name="Purnelle B."/>
            <person name="Masuy D."/>
            <person name="de Haan M."/>
            <person name="Maarse A.C."/>
            <person name="Alcaraz J.-P."/>
            <person name="Cottet A."/>
            <person name="Casacuberta E."/>
            <person name="Monfort A."/>
            <person name="Argiriou A."/>
            <person name="Flores M."/>
            <person name="Liguori R."/>
            <person name="Vitale D."/>
            <person name="Mannhaupt G."/>
            <person name="Haase D."/>
            <person name="Schoof H."/>
            <person name="Rudd S."/>
            <person name="Zaccaria P."/>
            <person name="Mewes H.-W."/>
            <person name="Mayer K.F.X."/>
            <person name="Kaul S."/>
            <person name="Town C.D."/>
            <person name="Koo H.L."/>
            <person name="Tallon L.J."/>
            <person name="Jenkins J."/>
            <person name="Rooney T."/>
            <person name="Rizzo M."/>
            <person name="Walts A."/>
            <person name="Utterback T."/>
            <person name="Fujii C.Y."/>
            <person name="Shea T.P."/>
            <person name="Creasy T.H."/>
            <person name="Haas B."/>
            <person name="Maiti R."/>
            <person name="Wu D."/>
            <person name="Peterson J."/>
            <person name="Van Aken S."/>
            <person name="Pai G."/>
            <person name="Militscher J."/>
            <person name="Sellers P."/>
            <person name="Gill J.E."/>
            <person name="Feldblyum T.V."/>
            <person name="Preuss D."/>
            <person name="Lin X."/>
            <person name="Nierman W.C."/>
            <person name="Salzberg S.L."/>
            <person name="White O."/>
            <person name="Venter J.C."/>
            <person name="Fraser C.M."/>
            <person name="Kaneko T."/>
            <person name="Nakamura Y."/>
            <person name="Sato S."/>
            <person name="Kato T."/>
            <person name="Asamizu E."/>
            <person name="Sasamoto S."/>
            <person name="Kimura T."/>
            <person name="Idesawa K."/>
            <person name="Kawashima K."/>
            <person name="Kishida Y."/>
            <person name="Kiyokawa C."/>
            <person name="Kohara M."/>
            <person name="Matsumoto M."/>
            <person name="Matsuno A."/>
            <person name="Muraki A."/>
            <person name="Nakayama S."/>
            <person name="Nakazaki N."/>
            <person name="Shinpo S."/>
            <person name="Takeuchi C."/>
            <person name="Wada T."/>
            <person name="Watanabe A."/>
            <person name="Yamada M."/>
            <person name="Yasuda M."/>
            <person name="Tabata S."/>
        </authorList>
    </citation>
    <scope>NUCLEOTIDE SEQUENCE [LARGE SCALE GENOMIC DNA]</scope>
    <source>
        <strain>cv. Columbia</strain>
    </source>
</reference>
<reference key="2">
    <citation type="journal article" date="2017" name="Plant J.">
        <title>Araport11: a complete reannotation of the Arabidopsis thaliana reference genome.</title>
        <authorList>
            <person name="Cheng C.Y."/>
            <person name="Krishnakumar V."/>
            <person name="Chan A.P."/>
            <person name="Thibaud-Nissen F."/>
            <person name="Schobel S."/>
            <person name="Town C.D."/>
        </authorList>
    </citation>
    <scope>GENOME REANNOTATION</scope>
    <source>
        <strain>cv. Columbia</strain>
    </source>
</reference>
<reference key="3">
    <citation type="submission" date="2005-07" db="EMBL/GenBank/DDBJ databases">
        <title>Reconstruction of cDNA sequences for hypothetical genes in Arabidopsis thaliana from 5' and 3' RACE products.</title>
        <authorList>
            <person name="Xiao Y.-L."/>
            <person name="Underwood B.A."/>
            <person name="Moskal W.A."/>
            <person name="Redman J.C."/>
            <person name="Wang W."/>
            <person name="Monaghan E.L."/>
            <person name="Wu H.C."/>
            <person name="Utterback T."/>
            <person name="Town C.D."/>
        </authorList>
    </citation>
    <scope>NUCLEOTIDE SEQUENCE [LARGE SCALE MRNA] OF 18-298</scope>
    <source>
        <strain>cv. Columbia</strain>
    </source>
</reference>
<reference key="4">
    <citation type="submission" date="2005-03" db="EMBL/GenBank/DDBJ databases">
        <authorList>
            <person name="Underwood B.A."/>
            <person name="Xiao Y.-L."/>
            <person name="Moskal W.A. Jr."/>
            <person name="Monaghan E.L."/>
            <person name="Wang W."/>
            <person name="Redman J.C."/>
            <person name="Wu H.C."/>
            <person name="Utterback T."/>
            <person name="Town C.D."/>
        </authorList>
    </citation>
    <scope>NUCLEOTIDE SEQUENCE [LARGE SCALE MRNA] OF 56-298</scope>
    <source>
        <strain>cv. Columbia</strain>
    </source>
</reference>
<reference key="5">
    <citation type="journal article" date="2010" name="Plant Physiol.">
        <title>RTM3, which controls long-distance movement of potyviruses, is a member of a new plant gene family encoding a meprin and TRAF homology domain-containing protein.</title>
        <authorList>
            <person name="Cosson P."/>
            <person name="Sofer L."/>
            <person name="Le Q.H."/>
            <person name="Leger V."/>
            <person name="Schurdi-Levraud V."/>
            <person name="Whitham S.A."/>
            <person name="Yamamoto M.L."/>
            <person name="Gopalan S."/>
            <person name="Le Gall O."/>
            <person name="Candresse T."/>
            <person name="Carrington J.C."/>
            <person name="Revers F."/>
        </authorList>
    </citation>
    <scope>GENE FAMILY</scope>
</reference>
<gene>
    <name type="ordered locus">At3g58280</name>
    <name type="ORF">F9D24.190</name>
</gene>
<evidence type="ECO:0000255" key="1"/>
<evidence type="ECO:0000255" key="2">
    <source>
        <dbReference type="PROSITE-ProRule" id="PRU00129"/>
    </source>
</evidence>
<evidence type="ECO:0000305" key="3"/>
<organism>
    <name type="scientific">Arabidopsis thaliana</name>
    <name type="common">Mouse-ear cress</name>
    <dbReference type="NCBI Taxonomy" id="3702"/>
    <lineage>
        <taxon>Eukaryota</taxon>
        <taxon>Viridiplantae</taxon>
        <taxon>Streptophyta</taxon>
        <taxon>Embryophyta</taxon>
        <taxon>Tracheophyta</taxon>
        <taxon>Spermatophyta</taxon>
        <taxon>Magnoliopsida</taxon>
        <taxon>eudicotyledons</taxon>
        <taxon>Gunneridae</taxon>
        <taxon>Pentapetalae</taxon>
        <taxon>rosids</taxon>
        <taxon>malvids</taxon>
        <taxon>Brassicales</taxon>
        <taxon>Brassicaceae</taxon>
        <taxon>Camelineae</taxon>
        <taxon>Arabidopsis</taxon>
    </lineage>
</organism>
<protein>
    <recommendedName>
        <fullName>MATH domain and coiled-coil domain-containing protein At3g58280</fullName>
    </recommendedName>
    <alternativeName>
        <fullName>RTM3-like protein At3g58280</fullName>
    </alternativeName>
</protein>